<dbReference type="EC" id="2.4.2.18" evidence="1"/>
<dbReference type="EMBL" id="CP000713">
    <property type="protein sequence ID" value="ABQ94587.1"/>
    <property type="molecule type" value="Genomic_DNA"/>
</dbReference>
<dbReference type="SMR" id="A5WFZ6"/>
<dbReference type="STRING" id="349106.PsycPRwf_1647"/>
<dbReference type="KEGG" id="prw:PsycPRwf_1647"/>
<dbReference type="eggNOG" id="COG0547">
    <property type="taxonomic scope" value="Bacteria"/>
</dbReference>
<dbReference type="HOGENOM" id="CLU_034315_2_1_6"/>
<dbReference type="UniPathway" id="UPA00035">
    <property type="reaction ID" value="UER00041"/>
</dbReference>
<dbReference type="GO" id="GO:0005829">
    <property type="term" value="C:cytosol"/>
    <property type="evidence" value="ECO:0007669"/>
    <property type="project" value="TreeGrafter"/>
</dbReference>
<dbReference type="GO" id="GO:0004048">
    <property type="term" value="F:anthranilate phosphoribosyltransferase activity"/>
    <property type="evidence" value="ECO:0007669"/>
    <property type="project" value="UniProtKB-UniRule"/>
</dbReference>
<dbReference type="GO" id="GO:0000287">
    <property type="term" value="F:magnesium ion binding"/>
    <property type="evidence" value="ECO:0007669"/>
    <property type="project" value="UniProtKB-UniRule"/>
</dbReference>
<dbReference type="GO" id="GO:0000162">
    <property type="term" value="P:L-tryptophan biosynthetic process"/>
    <property type="evidence" value="ECO:0007669"/>
    <property type="project" value="UniProtKB-UniRule"/>
</dbReference>
<dbReference type="FunFam" id="3.40.1030.10:FF:000002">
    <property type="entry name" value="Anthranilate phosphoribosyltransferase"/>
    <property type="match status" value="1"/>
</dbReference>
<dbReference type="Gene3D" id="3.40.1030.10">
    <property type="entry name" value="Nucleoside phosphorylase/phosphoribosyltransferase catalytic domain"/>
    <property type="match status" value="1"/>
</dbReference>
<dbReference type="Gene3D" id="1.20.970.10">
    <property type="entry name" value="Transferase, Pyrimidine Nucleoside Phosphorylase, Chain C"/>
    <property type="match status" value="1"/>
</dbReference>
<dbReference type="HAMAP" id="MF_00211">
    <property type="entry name" value="TrpD"/>
    <property type="match status" value="1"/>
</dbReference>
<dbReference type="InterPro" id="IPR005940">
    <property type="entry name" value="Anthranilate_Pribosyl_Tfrase"/>
</dbReference>
<dbReference type="InterPro" id="IPR000312">
    <property type="entry name" value="Glycosyl_Trfase_fam3"/>
</dbReference>
<dbReference type="InterPro" id="IPR017459">
    <property type="entry name" value="Glycosyl_Trfase_fam3_N_dom"/>
</dbReference>
<dbReference type="InterPro" id="IPR036320">
    <property type="entry name" value="Glycosyl_Trfase_fam3_N_dom_sf"/>
</dbReference>
<dbReference type="InterPro" id="IPR035902">
    <property type="entry name" value="Nuc_phospho_transferase"/>
</dbReference>
<dbReference type="NCBIfam" id="TIGR01245">
    <property type="entry name" value="trpD"/>
    <property type="match status" value="1"/>
</dbReference>
<dbReference type="PANTHER" id="PTHR43285">
    <property type="entry name" value="ANTHRANILATE PHOSPHORIBOSYLTRANSFERASE"/>
    <property type="match status" value="1"/>
</dbReference>
<dbReference type="PANTHER" id="PTHR43285:SF2">
    <property type="entry name" value="ANTHRANILATE PHOSPHORIBOSYLTRANSFERASE"/>
    <property type="match status" value="1"/>
</dbReference>
<dbReference type="Pfam" id="PF02885">
    <property type="entry name" value="Glycos_trans_3N"/>
    <property type="match status" value="1"/>
</dbReference>
<dbReference type="Pfam" id="PF00591">
    <property type="entry name" value="Glycos_transf_3"/>
    <property type="match status" value="1"/>
</dbReference>
<dbReference type="SUPFAM" id="SSF52418">
    <property type="entry name" value="Nucleoside phosphorylase/phosphoribosyltransferase catalytic domain"/>
    <property type="match status" value="1"/>
</dbReference>
<dbReference type="SUPFAM" id="SSF47648">
    <property type="entry name" value="Nucleoside phosphorylase/phosphoribosyltransferase N-terminal domain"/>
    <property type="match status" value="1"/>
</dbReference>
<gene>
    <name evidence="1" type="primary">trpD</name>
    <name type="ordered locus">PsycPRwf_1647</name>
</gene>
<sequence>MPNTALSTAELTDDQVHDILTTALARILRRIDLTQQEMRQIMTIIMDGRCPDAMLGALLTGLNMKSESIDEITASASVMLDFAKKIEPKNRTNMVDIVGTGGDGSNLFNVSTASAFVAAAAGATVAKHGNRGVSSKSGSSDLLEQAGLNLNITPEQTRECIETQGIGFLFAPNHHTAMKHAIPVRRALKVRTIFNILGPLTNPAGVKNLVVGVFTDNMCEPLAHVFKNLGAKHVMVVGSKDRLDEISLATSTKVAELKDGEVTVYDIFPEDAGIDSQTLVGLDVNSSEQSLQLIQAALSGKETNDFGIAQNKVNKARDMIALNAGAAIYVAGLASNFPNGVNQAQNILQSGKALQKMQALAEYTQTFDR</sequence>
<reference key="1">
    <citation type="submission" date="2007-05" db="EMBL/GenBank/DDBJ databases">
        <title>Complete sequence of chromosome of Psychrobacter sp. PRwf-1.</title>
        <authorList>
            <consortium name="US DOE Joint Genome Institute"/>
            <person name="Copeland A."/>
            <person name="Lucas S."/>
            <person name="Lapidus A."/>
            <person name="Barry K."/>
            <person name="Detter J.C."/>
            <person name="Glavina del Rio T."/>
            <person name="Hammon N."/>
            <person name="Israni S."/>
            <person name="Dalin E."/>
            <person name="Tice H."/>
            <person name="Pitluck S."/>
            <person name="Chain P."/>
            <person name="Malfatti S."/>
            <person name="Shin M."/>
            <person name="Vergez L."/>
            <person name="Schmutz J."/>
            <person name="Larimer F."/>
            <person name="Land M."/>
            <person name="Hauser L."/>
            <person name="Kyrpides N."/>
            <person name="Kim E."/>
            <person name="Tiedje J."/>
            <person name="Richardson P."/>
        </authorList>
    </citation>
    <scope>NUCLEOTIDE SEQUENCE [LARGE SCALE GENOMIC DNA]</scope>
    <source>
        <strain>PRwf-1</strain>
    </source>
</reference>
<proteinExistence type="inferred from homology"/>
<protein>
    <recommendedName>
        <fullName evidence="1">Anthranilate phosphoribosyltransferase</fullName>
        <ecNumber evidence="1">2.4.2.18</ecNumber>
    </recommendedName>
</protein>
<comment type="function">
    <text evidence="1">Catalyzes the transfer of the phosphoribosyl group of 5-phosphorylribose-1-pyrophosphate (PRPP) to anthranilate to yield N-(5'-phosphoribosyl)-anthranilate (PRA).</text>
</comment>
<comment type="catalytic activity">
    <reaction evidence="1">
        <text>N-(5-phospho-beta-D-ribosyl)anthranilate + diphosphate = 5-phospho-alpha-D-ribose 1-diphosphate + anthranilate</text>
        <dbReference type="Rhea" id="RHEA:11768"/>
        <dbReference type="ChEBI" id="CHEBI:16567"/>
        <dbReference type="ChEBI" id="CHEBI:18277"/>
        <dbReference type="ChEBI" id="CHEBI:33019"/>
        <dbReference type="ChEBI" id="CHEBI:58017"/>
        <dbReference type="EC" id="2.4.2.18"/>
    </reaction>
</comment>
<comment type="cofactor">
    <cofactor evidence="1">
        <name>Mg(2+)</name>
        <dbReference type="ChEBI" id="CHEBI:18420"/>
    </cofactor>
    <text evidence="1">Binds 2 magnesium ions per monomer.</text>
</comment>
<comment type="pathway">
    <text evidence="1">Amino-acid biosynthesis; L-tryptophan biosynthesis; L-tryptophan from chorismate: step 2/5.</text>
</comment>
<comment type="subunit">
    <text evidence="1">Homodimer.</text>
</comment>
<comment type="similarity">
    <text evidence="1">Belongs to the anthranilate phosphoribosyltransferase family.</text>
</comment>
<accession>A5WFZ6</accession>
<feature type="chain" id="PRO_0000325450" description="Anthranilate phosphoribosyltransferase">
    <location>
        <begin position="1"/>
        <end position="369"/>
    </location>
</feature>
<feature type="binding site" evidence="1">
    <location>
        <position position="99"/>
    </location>
    <ligand>
        <name>5-phospho-alpha-D-ribose 1-diphosphate</name>
        <dbReference type="ChEBI" id="CHEBI:58017"/>
    </ligand>
</feature>
<feature type="binding site" evidence="1">
    <location>
        <position position="99"/>
    </location>
    <ligand>
        <name>anthranilate</name>
        <dbReference type="ChEBI" id="CHEBI:16567"/>
        <label>1</label>
    </ligand>
</feature>
<feature type="binding site" evidence="1">
    <location>
        <begin position="102"/>
        <end position="103"/>
    </location>
    <ligand>
        <name>5-phospho-alpha-D-ribose 1-diphosphate</name>
        <dbReference type="ChEBI" id="CHEBI:58017"/>
    </ligand>
</feature>
<feature type="binding site" evidence="1">
    <location>
        <begin position="109"/>
        <end position="112"/>
    </location>
    <ligand>
        <name>5-phospho-alpha-D-ribose 1-diphosphate</name>
        <dbReference type="ChEBI" id="CHEBI:58017"/>
    </ligand>
</feature>
<feature type="binding site" evidence="1">
    <location>
        <position position="111"/>
    </location>
    <ligand>
        <name>Mg(2+)</name>
        <dbReference type="ChEBI" id="CHEBI:18420"/>
        <label>1</label>
    </ligand>
</feature>
<feature type="binding site" evidence="1">
    <location>
        <begin position="127"/>
        <end position="135"/>
    </location>
    <ligand>
        <name>5-phospho-alpha-D-ribose 1-diphosphate</name>
        <dbReference type="ChEBI" id="CHEBI:58017"/>
    </ligand>
</feature>
<feature type="binding site" evidence="1">
    <location>
        <position position="130"/>
    </location>
    <ligand>
        <name>anthranilate</name>
        <dbReference type="ChEBI" id="CHEBI:16567"/>
        <label>1</label>
    </ligand>
</feature>
<feature type="binding site" evidence="1">
    <location>
        <position position="139"/>
    </location>
    <ligand>
        <name>5-phospho-alpha-D-ribose 1-diphosphate</name>
        <dbReference type="ChEBI" id="CHEBI:58017"/>
    </ligand>
</feature>
<feature type="binding site" evidence="1">
    <location>
        <position position="185"/>
    </location>
    <ligand>
        <name>anthranilate</name>
        <dbReference type="ChEBI" id="CHEBI:16567"/>
        <label>2</label>
    </ligand>
</feature>
<feature type="binding site" evidence="1">
    <location>
        <position position="244"/>
    </location>
    <ligand>
        <name>Mg(2+)</name>
        <dbReference type="ChEBI" id="CHEBI:18420"/>
        <label>2</label>
    </ligand>
</feature>
<feature type="binding site" evidence="1">
    <location>
        <position position="245"/>
    </location>
    <ligand>
        <name>Mg(2+)</name>
        <dbReference type="ChEBI" id="CHEBI:18420"/>
        <label>1</label>
    </ligand>
</feature>
<feature type="binding site" evidence="1">
    <location>
        <position position="245"/>
    </location>
    <ligand>
        <name>Mg(2+)</name>
        <dbReference type="ChEBI" id="CHEBI:18420"/>
        <label>2</label>
    </ligand>
</feature>
<organism>
    <name type="scientific">Psychrobacter sp. (strain PRwf-1)</name>
    <dbReference type="NCBI Taxonomy" id="349106"/>
    <lineage>
        <taxon>Bacteria</taxon>
        <taxon>Pseudomonadati</taxon>
        <taxon>Pseudomonadota</taxon>
        <taxon>Gammaproteobacteria</taxon>
        <taxon>Moraxellales</taxon>
        <taxon>Moraxellaceae</taxon>
        <taxon>Psychrobacter</taxon>
    </lineage>
</organism>
<keyword id="KW-0028">Amino-acid biosynthesis</keyword>
<keyword id="KW-0057">Aromatic amino acid biosynthesis</keyword>
<keyword id="KW-0328">Glycosyltransferase</keyword>
<keyword id="KW-0460">Magnesium</keyword>
<keyword id="KW-0479">Metal-binding</keyword>
<keyword id="KW-0808">Transferase</keyword>
<keyword id="KW-0822">Tryptophan biosynthesis</keyword>
<name>TRPD_PSYWF</name>
<evidence type="ECO:0000255" key="1">
    <source>
        <dbReference type="HAMAP-Rule" id="MF_00211"/>
    </source>
</evidence>